<reference key="1">
    <citation type="journal article" date="2003" name="PLoS Biol.">
        <title>The genome sequence of Caenorhabditis briggsae: a platform for comparative genomics.</title>
        <authorList>
            <person name="Stein L.D."/>
            <person name="Bao Z."/>
            <person name="Blasiar D."/>
            <person name="Blumenthal T."/>
            <person name="Brent M.R."/>
            <person name="Chen N."/>
            <person name="Chinwalla A."/>
            <person name="Clarke L."/>
            <person name="Clee C."/>
            <person name="Coghlan A."/>
            <person name="Coulson A."/>
            <person name="D'Eustachio P."/>
            <person name="Fitch D.H.A."/>
            <person name="Fulton L.A."/>
            <person name="Fulton R.E."/>
            <person name="Griffiths-Jones S."/>
            <person name="Harris T.W."/>
            <person name="Hillier L.W."/>
            <person name="Kamath R."/>
            <person name="Kuwabara P.E."/>
            <person name="Mardis E.R."/>
            <person name="Marra M.A."/>
            <person name="Miner T.L."/>
            <person name="Minx P."/>
            <person name="Mullikin J.C."/>
            <person name="Plumb R.W."/>
            <person name="Rogers J."/>
            <person name="Schein J.E."/>
            <person name="Sohrmann M."/>
            <person name="Spieth J."/>
            <person name="Stajich J.E."/>
            <person name="Wei C."/>
            <person name="Willey D."/>
            <person name="Wilson R.K."/>
            <person name="Durbin R.M."/>
            <person name="Waterston R.H."/>
        </authorList>
    </citation>
    <scope>NUCLEOTIDE SEQUENCE [LARGE SCALE GENOMIC DNA]</scope>
    <source>
        <strain>AF16</strain>
    </source>
</reference>
<dbReference type="EC" id="1.1.99.2"/>
<dbReference type="EMBL" id="HE601320">
    <property type="protein sequence ID" value="CBX33056.1"/>
    <property type="molecule type" value="Genomic_DNA"/>
</dbReference>
<dbReference type="RefSeq" id="XP_045100803.1">
    <property type="nucleotide sequence ID" value="XM_045237240.1"/>
</dbReference>
<dbReference type="SMR" id="A8X2R1"/>
<dbReference type="FunCoup" id="A8X2R1">
    <property type="interactions" value="2221"/>
</dbReference>
<dbReference type="STRING" id="6238.A8X2R1"/>
<dbReference type="EnsemblMetazoa" id="CBG06643.1">
    <property type="protein sequence ID" value="CBG06643.1"/>
    <property type="gene ID" value="WBGene00028888"/>
</dbReference>
<dbReference type="GeneID" id="8589555"/>
<dbReference type="WormBase" id="CBG06643">
    <property type="protein sequence ID" value="CBP37606"/>
    <property type="gene ID" value="WBGene00028888"/>
</dbReference>
<dbReference type="eggNOG" id="KOG2665">
    <property type="taxonomic scope" value="Eukaryota"/>
</dbReference>
<dbReference type="HOGENOM" id="CLU_024775_0_0_1"/>
<dbReference type="InParanoid" id="A8X2R1"/>
<dbReference type="OMA" id="GVHFTRM"/>
<dbReference type="Proteomes" id="UP000008549">
    <property type="component" value="Unassembled WGS sequence"/>
</dbReference>
<dbReference type="GO" id="GO:0005739">
    <property type="term" value="C:mitochondrion"/>
    <property type="evidence" value="ECO:0007669"/>
    <property type="project" value="UniProtKB-SubCell"/>
</dbReference>
<dbReference type="GO" id="GO:0047545">
    <property type="term" value="F:2-hydroxyglutarate dehydrogenase activity"/>
    <property type="evidence" value="ECO:0000318"/>
    <property type="project" value="GO_Central"/>
</dbReference>
<dbReference type="Gene3D" id="3.30.9.10">
    <property type="entry name" value="D-Amino Acid Oxidase, subunit A, domain 2"/>
    <property type="match status" value="1"/>
</dbReference>
<dbReference type="Gene3D" id="3.50.50.60">
    <property type="entry name" value="FAD/NAD(P)-binding domain"/>
    <property type="match status" value="1"/>
</dbReference>
<dbReference type="InterPro" id="IPR006076">
    <property type="entry name" value="FAD-dep_OxRdtase"/>
</dbReference>
<dbReference type="InterPro" id="IPR036188">
    <property type="entry name" value="FAD/NAD-bd_sf"/>
</dbReference>
<dbReference type="NCBIfam" id="NF008726">
    <property type="entry name" value="PRK11728.1"/>
    <property type="match status" value="1"/>
</dbReference>
<dbReference type="PANTHER" id="PTHR43104">
    <property type="entry name" value="L-2-HYDROXYGLUTARATE DEHYDROGENASE, MITOCHONDRIAL"/>
    <property type="match status" value="1"/>
</dbReference>
<dbReference type="PANTHER" id="PTHR43104:SF2">
    <property type="entry name" value="L-2-HYDROXYGLUTARATE DEHYDROGENASE, MITOCHONDRIAL"/>
    <property type="match status" value="1"/>
</dbReference>
<dbReference type="Pfam" id="PF01266">
    <property type="entry name" value="DAO"/>
    <property type="match status" value="1"/>
</dbReference>
<dbReference type="SUPFAM" id="SSF51905">
    <property type="entry name" value="FAD/NAD(P)-binding domain"/>
    <property type="match status" value="1"/>
</dbReference>
<sequence length="434" mass="48359">MLTRKTFHAFRSISGPPKKSVELPKYDLVIVGGGIVGCATARQLLIEKPNLKIALVEKEKELAVHQSGHNSGVIHAGIYYTPGSLKAKLCVEGLDLSYEFFDKEKIPYKKTGKLIVAVEQEEVPRLDALFARAQTNGCRDIEMIDSKRITDIEPHCKGLKALWSPHTGIVDWGYVTKKFGEDFEKRGGKIYTSYPLEKIEDNLKDSNYPIRVSSDPSYADFETKNLITCAGLQSDRVAALSGCSTDPKIVPFRGEYLLLKPEKRHLVKTNIYPVPDPRFPFLGVHFTPRMNGDIWLGPNAVLAYKREGYSYFSISPSDLLESLSYSGMQKLVKKHFTFGIKELYRGIWIAAQVKQLQRFIPELKYSDVTRGPSGVRAQAMDSAGNLVDDFVFDSGTGKLSSLIMHVRNAPSPAATSSLAIAKMITSEAITRFKL</sequence>
<organism>
    <name type="scientific">Caenorhabditis briggsae</name>
    <dbReference type="NCBI Taxonomy" id="6238"/>
    <lineage>
        <taxon>Eukaryota</taxon>
        <taxon>Metazoa</taxon>
        <taxon>Ecdysozoa</taxon>
        <taxon>Nematoda</taxon>
        <taxon>Chromadorea</taxon>
        <taxon>Rhabditida</taxon>
        <taxon>Rhabditina</taxon>
        <taxon>Rhabditomorpha</taxon>
        <taxon>Rhabditoidea</taxon>
        <taxon>Rhabditidae</taxon>
        <taxon>Peloderinae</taxon>
        <taxon>Caenorhabditis</taxon>
    </lineage>
</organism>
<keyword id="KW-0274">FAD</keyword>
<keyword id="KW-0285">Flavoprotein</keyword>
<keyword id="KW-0496">Mitochondrion</keyword>
<keyword id="KW-0560">Oxidoreductase</keyword>
<keyword id="KW-1185">Reference proteome</keyword>
<keyword id="KW-0809">Transit peptide</keyword>
<comment type="catalytic activity">
    <reaction>
        <text>(S)-2-hydroxyglutarate + A = 2-oxoglutarate + AH2</text>
        <dbReference type="Rhea" id="RHEA:21252"/>
        <dbReference type="ChEBI" id="CHEBI:13193"/>
        <dbReference type="ChEBI" id="CHEBI:16782"/>
        <dbReference type="ChEBI" id="CHEBI:16810"/>
        <dbReference type="ChEBI" id="CHEBI:17499"/>
        <dbReference type="EC" id="1.1.99.2"/>
    </reaction>
</comment>
<comment type="cofactor">
    <cofactor evidence="1">
        <name>FAD</name>
        <dbReference type="ChEBI" id="CHEBI:57692"/>
    </cofactor>
</comment>
<comment type="subcellular location">
    <subcellularLocation>
        <location evidence="1">Mitochondrion</location>
    </subcellularLocation>
</comment>
<comment type="similarity">
    <text evidence="3">Belongs to the L2HGDH family.</text>
</comment>
<accession>A8X2R1</accession>
<accession>E3CTZ3</accession>
<gene>
    <name type="ORF">CBG06643</name>
</gene>
<name>L2HDH_CAEBR</name>
<protein>
    <recommendedName>
        <fullName>L-2-hydroxyglutarate dehydrogenase, mitochondrial</fullName>
        <ecNumber>1.1.99.2</ecNumber>
    </recommendedName>
</protein>
<proteinExistence type="inferred from homology"/>
<evidence type="ECO:0000250" key="1"/>
<evidence type="ECO:0000255" key="2"/>
<evidence type="ECO:0000305" key="3"/>
<feature type="transit peptide" description="Mitochondrion" evidence="2">
    <location>
        <begin position="1"/>
        <end status="unknown"/>
    </location>
</feature>
<feature type="chain" id="PRO_0000331210" description="L-2-hydroxyglutarate dehydrogenase, mitochondrial">
    <location>
        <begin status="unknown"/>
        <end position="434"/>
    </location>
</feature>